<gene>
    <name evidence="1" type="primary">ndhK</name>
    <name type="ordered locus">Synpcc7942_1181</name>
</gene>
<keyword id="KW-0004">4Fe-4S</keyword>
<keyword id="KW-0408">Iron</keyword>
<keyword id="KW-0411">Iron-sulfur</keyword>
<keyword id="KW-0472">Membrane</keyword>
<keyword id="KW-0479">Metal-binding</keyword>
<keyword id="KW-0520">NAD</keyword>
<keyword id="KW-0521">NADP</keyword>
<keyword id="KW-0618">Plastoquinone</keyword>
<keyword id="KW-0874">Quinone</keyword>
<keyword id="KW-1185">Reference proteome</keyword>
<keyword id="KW-0793">Thylakoid</keyword>
<keyword id="KW-1278">Translocase</keyword>
<keyword id="KW-0813">Transport</keyword>
<name>NDHK_SYNE7</name>
<sequence>MVLTNPAEIRNPAAPPEITQGLSENVILTTLDDLYNWARLSSLWPLMYGTACCFIEFAALIGSRFDFDRFGLVPRCSPRQADLLITAGTVTMKMAPALVRLYEQMPEPKYVIAMGACTITGGMFSADSTTTVRGVDKLLPVDVYIPGCPPRPEAIIDAIVKLRKKVANDSIQERGKLLQTNRYYSTTHQMKPTAPLLTGEYLRSAARQAGPLPAAAGAAVAPQLPVTEKEGRDRA</sequence>
<feature type="chain" id="PRO_0000358488" description="NAD(P)H-quinone oxidoreductase subunit K">
    <location>
        <begin position="1"/>
        <end position="235"/>
    </location>
</feature>
<feature type="region of interest" description="Disordered" evidence="2">
    <location>
        <begin position="216"/>
        <end position="235"/>
    </location>
</feature>
<feature type="compositionally biased region" description="Low complexity" evidence="2">
    <location>
        <begin position="216"/>
        <end position="226"/>
    </location>
</feature>
<feature type="binding site" evidence="1">
    <location>
        <position position="52"/>
    </location>
    <ligand>
        <name>[4Fe-4S] cluster</name>
        <dbReference type="ChEBI" id="CHEBI:49883"/>
    </ligand>
</feature>
<feature type="binding site" evidence="1">
    <location>
        <position position="53"/>
    </location>
    <ligand>
        <name>[4Fe-4S] cluster</name>
        <dbReference type="ChEBI" id="CHEBI:49883"/>
    </ligand>
</feature>
<feature type="binding site" evidence="1">
    <location>
        <position position="117"/>
    </location>
    <ligand>
        <name>[4Fe-4S] cluster</name>
        <dbReference type="ChEBI" id="CHEBI:49883"/>
    </ligand>
</feature>
<feature type="binding site" evidence="1">
    <location>
        <position position="148"/>
    </location>
    <ligand>
        <name>[4Fe-4S] cluster</name>
        <dbReference type="ChEBI" id="CHEBI:49883"/>
    </ligand>
</feature>
<evidence type="ECO:0000255" key="1">
    <source>
        <dbReference type="HAMAP-Rule" id="MF_01356"/>
    </source>
</evidence>
<evidence type="ECO:0000256" key="2">
    <source>
        <dbReference type="SAM" id="MobiDB-lite"/>
    </source>
</evidence>
<comment type="function">
    <text evidence="1">NDH-1 shuttles electrons from an unknown electron donor, via FMN and iron-sulfur (Fe-S) centers, to quinones in the respiratory and/or the photosynthetic chain. The immediate electron acceptor for the enzyme in this species is believed to be plastoquinone. Couples the redox reaction to proton translocation, and thus conserves the redox energy in a proton gradient. Cyanobacterial NDH-1 also plays a role in inorganic carbon-concentration.</text>
</comment>
<comment type="catalytic activity">
    <reaction evidence="1">
        <text>a plastoquinone + NADH + (n+1) H(+)(in) = a plastoquinol + NAD(+) + n H(+)(out)</text>
        <dbReference type="Rhea" id="RHEA:42608"/>
        <dbReference type="Rhea" id="RHEA-COMP:9561"/>
        <dbReference type="Rhea" id="RHEA-COMP:9562"/>
        <dbReference type="ChEBI" id="CHEBI:15378"/>
        <dbReference type="ChEBI" id="CHEBI:17757"/>
        <dbReference type="ChEBI" id="CHEBI:57540"/>
        <dbReference type="ChEBI" id="CHEBI:57945"/>
        <dbReference type="ChEBI" id="CHEBI:62192"/>
    </reaction>
</comment>
<comment type="catalytic activity">
    <reaction evidence="1">
        <text>a plastoquinone + NADPH + (n+1) H(+)(in) = a plastoquinol + NADP(+) + n H(+)(out)</text>
        <dbReference type="Rhea" id="RHEA:42612"/>
        <dbReference type="Rhea" id="RHEA-COMP:9561"/>
        <dbReference type="Rhea" id="RHEA-COMP:9562"/>
        <dbReference type="ChEBI" id="CHEBI:15378"/>
        <dbReference type="ChEBI" id="CHEBI:17757"/>
        <dbReference type="ChEBI" id="CHEBI:57783"/>
        <dbReference type="ChEBI" id="CHEBI:58349"/>
        <dbReference type="ChEBI" id="CHEBI:62192"/>
    </reaction>
</comment>
<comment type="cofactor">
    <cofactor evidence="1">
        <name>[4Fe-4S] cluster</name>
        <dbReference type="ChEBI" id="CHEBI:49883"/>
    </cofactor>
    <text evidence="1">Binds 1 [4Fe-4S] cluster.</text>
</comment>
<comment type="subunit">
    <text evidence="1">NDH-1 can be composed of about 15 different subunits; different subcomplexes with different compositions have been identified which probably have different functions.</text>
</comment>
<comment type="subcellular location">
    <subcellularLocation>
        <location evidence="1">Cellular thylakoid membrane</location>
        <topology evidence="1">Peripheral membrane protein</topology>
        <orientation evidence="1">Cytoplasmic side</orientation>
    </subcellularLocation>
</comment>
<comment type="similarity">
    <text evidence="1">Belongs to the complex I 20 kDa subunit family.</text>
</comment>
<protein>
    <recommendedName>
        <fullName evidence="1">NAD(P)H-quinone oxidoreductase subunit K</fullName>
        <ecNumber evidence="1">7.1.1.-</ecNumber>
    </recommendedName>
    <alternativeName>
        <fullName evidence="1">NAD(P)H dehydrogenase I subunit K</fullName>
    </alternativeName>
    <alternativeName>
        <fullName evidence="1">NDH-1 subunit K</fullName>
        <shortName evidence="1">NDH-K</shortName>
    </alternativeName>
</protein>
<reference key="1">
    <citation type="submission" date="2005-08" db="EMBL/GenBank/DDBJ databases">
        <title>Complete sequence of chromosome 1 of Synechococcus elongatus PCC 7942.</title>
        <authorList>
            <consortium name="US DOE Joint Genome Institute"/>
            <person name="Copeland A."/>
            <person name="Lucas S."/>
            <person name="Lapidus A."/>
            <person name="Barry K."/>
            <person name="Detter J.C."/>
            <person name="Glavina T."/>
            <person name="Hammon N."/>
            <person name="Israni S."/>
            <person name="Pitluck S."/>
            <person name="Schmutz J."/>
            <person name="Larimer F."/>
            <person name="Land M."/>
            <person name="Kyrpides N."/>
            <person name="Lykidis A."/>
            <person name="Golden S."/>
            <person name="Richardson P."/>
        </authorList>
    </citation>
    <scope>NUCLEOTIDE SEQUENCE [LARGE SCALE GENOMIC DNA]</scope>
    <source>
        <strain>ATCC 33912 / PCC 7942 / FACHB-805</strain>
    </source>
</reference>
<dbReference type="EC" id="7.1.1.-" evidence="1"/>
<dbReference type="EMBL" id="CP000100">
    <property type="protein sequence ID" value="ABB57211.1"/>
    <property type="molecule type" value="Genomic_DNA"/>
</dbReference>
<dbReference type="RefSeq" id="WP_011242681.1">
    <property type="nucleotide sequence ID" value="NZ_JACJTX010000003.1"/>
</dbReference>
<dbReference type="SMR" id="Q31P08"/>
<dbReference type="STRING" id="1140.Synpcc7942_1181"/>
<dbReference type="PaxDb" id="1140-Synpcc7942_1181"/>
<dbReference type="KEGG" id="syf:Synpcc7942_1181"/>
<dbReference type="eggNOG" id="COG0377">
    <property type="taxonomic scope" value="Bacteria"/>
</dbReference>
<dbReference type="HOGENOM" id="CLU_055737_2_1_3"/>
<dbReference type="OrthoDB" id="9786737at2"/>
<dbReference type="BioCyc" id="MetaCyc:SYNPCC7942_1181-MONOMER"/>
<dbReference type="BioCyc" id="SYNEL:SYNPCC7942_1181-MONOMER"/>
<dbReference type="Proteomes" id="UP000889800">
    <property type="component" value="Chromosome"/>
</dbReference>
<dbReference type="GO" id="GO:0031676">
    <property type="term" value="C:plasma membrane-derived thylakoid membrane"/>
    <property type="evidence" value="ECO:0007669"/>
    <property type="project" value="UniProtKB-SubCell"/>
</dbReference>
<dbReference type="GO" id="GO:0045271">
    <property type="term" value="C:respiratory chain complex I"/>
    <property type="evidence" value="ECO:0007669"/>
    <property type="project" value="TreeGrafter"/>
</dbReference>
<dbReference type="GO" id="GO:0051539">
    <property type="term" value="F:4 iron, 4 sulfur cluster binding"/>
    <property type="evidence" value="ECO:0007669"/>
    <property type="project" value="UniProtKB-KW"/>
</dbReference>
<dbReference type="GO" id="GO:0005506">
    <property type="term" value="F:iron ion binding"/>
    <property type="evidence" value="ECO:0007669"/>
    <property type="project" value="UniProtKB-UniRule"/>
</dbReference>
<dbReference type="GO" id="GO:0008137">
    <property type="term" value="F:NADH dehydrogenase (ubiquinone) activity"/>
    <property type="evidence" value="ECO:0007669"/>
    <property type="project" value="InterPro"/>
</dbReference>
<dbReference type="GO" id="GO:0048038">
    <property type="term" value="F:quinone binding"/>
    <property type="evidence" value="ECO:0007669"/>
    <property type="project" value="UniProtKB-KW"/>
</dbReference>
<dbReference type="GO" id="GO:0009060">
    <property type="term" value="P:aerobic respiration"/>
    <property type="evidence" value="ECO:0007669"/>
    <property type="project" value="TreeGrafter"/>
</dbReference>
<dbReference type="GO" id="GO:0015990">
    <property type="term" value="P:electron transport coupled proton transport"/>
    <property type="evidence" value="ECO:0007669"/>
    <property type="project" value="TreeGrafter"/>
</dbReference>
<dbReference type="GO" id="GO:0019684">
    <property type="term" value="P:photosynthesis, light reaction"/>
    <property type="evidence" value="ECO:0007669"/>
    <property type="project" value="UniProtKB-UniRule"/>
</dbReference>
<dbReference type="FunFam" id="3.40.50.12280:FF:000003">
    <property type="entry name" value="NAD(P)H-quinone oxidoreductase subunit K, chloroplastic"/>
    <property type="match status" value="1"/>
</dbReference>
<dbReference type="Gene3D" id="3.40.50.12280">
    <property type="match status" value="1"/>
</dbReference>
<dbReference type="HAMAP" id="MF_01356">
    <property type="entry name" value="NDH1_NuoB"/>
    <property type="match status" value="1"/>
</dbReference>
<dbReference type="InterPro" id="IPR006137">
    <property type="entry name" value="NADH_UbQ_OxRdtase-like_20kDa"/>
</dbReference>
<dbReference type="InterPro" id="IPR006138">
    <property type="entry name" value="NADH_UQ_OxRdtase_20Kd_su"/>
</dbReference>
<dbReference type="NCBIfam" id="TIGR01957">
    <property type="entry name" value="nuoB_fam"/>
    <property type="match status" value="1"/>
</dbReference>
<dbReference type="NCBIfam" id="NF005012">
    <property type="entry name" value="PRK06411.1"/>
    <property type="match status" value="1"/>
</dbReference>
<dbReference type="PANTHER" id="PTHR11995">
    <property type="entry name" value="NADH DEHYDROGENASE"/>
    <property type="match status" value="1"/>
</dbReference>
<dbReference type="PANTHER" id="PTHR11995:SF14">
    <property type="entry name" value="NADH DEHYDROGENASE [UBIQUINONE] IRON-SULFUR PROTEIN 7, MITOCHONDRIAL"/>
    <property type="match status" value="1"/>
</dbReference>
<dbReference type="Pfam" id="PF01058">
    <property type="entry name" value="Oxidored_q6"/>
    <property type="match status" value="1"/>
</dbReference>
<dbReference type="SUPFAM" id="SSF56770">
    <property type="entry name" value="HydA/Nqo6-like"/>
    <property type="match status" value="1"/>
</dbReference>
<dbReference type="PROSITE" id="PS01150">
    <property type="entry name" value="COMPLEX1_20K"/>
    <property type="match status" value="1"/>
</dbReference>
<organism>
    <name type="scientific">Synechococcus elongatus (strain ATCC 33912 / PCC 7942 / FACHB-805)</name>
    <name type="common">Anacystis nidulans R2</name>
    <dbReference type="NCBI Taxonomy" id="1140"/>
    <lineage>
        <taxon>Bacteria</taxon>
        <taxon>Bacillati</taxon>
        <taxon>Cyanobacteriota</taxon>
        <taxon>Cyanophyceae</taxon>
        <taxon>Synechococcales</taxon>
        <taxon>Synechococcaceae</taxon>
        <taxon>Synechococcus</taxon>
    </lineage>
</organism>
<accession>Q31P08</accession>
<proteinExistence type="inferred from homology"/>